<feature type="propeptide" id="PRO_0000018678" evidence="2">
    <location>
        <begin position="1"/>
        <end position="71"/>
    </location>
</feature>
<feature type="chain" id="PRO_0000018679" description="Acetyl-CoA--deacetylcephalosporin C O-acetyltransferase chain 1">
    <location>
        <begin position="72"/>
        <end position="318"/>
    </location>
</feature>
<feature type="chain" id="PRO_0000018680" description="Acetyl-CoA--deacetylcephalosporin C O-acetyltransferase chain 2">
    <location>
        <begin position="319"/>
        <end position="444"/>
    </location>
</feature>
<feature type="domain" description="AB hydrolase-1" evidence="1">
    <location>
        <begin position="112"/>
        <end position="425"/>
    </location>
</feature>
<feature type="active site" evidence="1">
    <location>
        <position position="208"/>
    </location>
</feature>
<feature type="active site" evidence="1">
    <location>
        <position position="421"/>
    </location>
</feature>
<feature type="helix" evidence="5">
    <location>
        <begin position="67"/>
        <end position="70"/>
    </location>
</feature>
<feature type="strand" evidence="5">
    <location>
        <begin position="76"/>
        <end position="84"/>
    </location>
</feature>
<feature type="strand" evidence="5">
    <location>
        <begin position="90"/>
        <end position="102"/>
    </location>
</feature>
<feature type="strand" evidence="5">
    <location>
        <begin position="111"/>
        <end position="115"/>
    </location>
</feature>
<feature type="helix" evidence="5">
    <location>
        <begin position="124"/>
        <end position="126"/>
    </location>
</feature>
<feature type="helix" evidence="5">
    <location>
        <begin position="129"/>
        <end position="131"/>
    </location>
</feature>
<feature type="strand" evidence="5">
    <location>
        <begin position="136"/>
        <end position="138"/>
    </location>
</feature>
<feature type="turn" evidence="5">
    <location>
        <begin position="140"/>
        <end position="142"/>
    </location>
</feature>
<feature type="strand" evidence="5">
    <location>
        <begin position="144"/>
        <end position="148"/>
    </location>
</feature>
<feature type="strand" evidence="5">
    <location>
        <begin position="154"/>
        <end position="159"/>
    </location>
</feature>
<feature type="turn" evidence="5">
    <location>
        <begin position="165"/>
        <end position="167"/>
    </location>
</feature>
<feature type="helix" evidence="5">
    <location>
        <begin position="174"/>
        <end position="176"/>
    </location>
</feature>
<feature type="helix" evidence="5">
    <location>
        <begin position="182"/>
        <end position="196"/>
    </location>
</feature>
<feature type="strand" evidence="5">
    <location>
        <begin position="201"/>
        <end position="207"/>
    </location>
</feature>
<feature type="helix" evidence="5">
    <location>
        <begin position="209"/>
        <end position="217"/>
    </location>
</feature>
<feature type="helix" evidence="5">
    <location>
        <begin position="218"/>
        <end position="220"/>
    </location>
</feature>
<feature type="turn" evidence="5">
    <location>
        <begin position="222"/>
        <end position="224"/>
    </location>
</feature>
<feature type="strand" evidence="5">
    <location>
        <begin position="228"/>
        <end position="232"/>
    </location>
</feature>
<feature type="helix" evidence="5">
    <location>
        <begin position="239"/>
        <end position="254"/>
    </location>
</feature>
<feature type="helix" evidence="5">
    <location>
        <begin position="259"/>
        <end position="261"/>
    </location>
</feature>
<feature type="helix" evidence="5">
    <location>
        <begin position="270"/>
        <end position="283"/>
    </location>
</feature>
<feature type="helix" evidence="5">
    <location>
        <begin position="287"/>
        <end position="293"/>
    </location>
</feature>
<feature type="helix" evidence="5">
    <location>
        <begin position="330"/>
        <end position="332"/>
    </location>
</feature>
<feature type="helix" evidence="5">
    <location>
        <begin position="333"/>
        <end position="346"/>
    </location>
</feature>
<feature type="helix" evidence="5">
    <location>
        <begin position="350"/>
        <end position="361"/>
    </location>
</feature>
<feature type="turn" evidence="5">
    <location>
        <begin position="365"/>
        <end position="369"/>
    </location>
</feature>
<feature type="helix" evidence="5">
    <location>
        <begin position="373"/>
        <end position="377"/>
    </location>
</feature>
<feature type="strand" evidence="5">
    <location>
        <begin position="384"/>
        <end position="388"/>
    </location>
</feature>
<feature type="strand" evidence="5">
    <location>
        <begin position="393"/>
        <end position="395"/>
    </location>
</feature>
<feature type="helix" evidence="5">
    <location>
        <begin position="397"/>
        <end position="406"/>
    </location>
</feature>
<feature type="strand" evidence="5">
    <location>
        <begin position="410"/>
        <end position="414"/>
    </location>
</feature>
<feature type="helix" evidence="5">
    <location>
        <begin position="420"/>
        <end position="422"/>
    </location>
</feature>
<feature type="helix" evidence="5">
    <location>
        <begin position="423"/>
        <end position="426"/>
    </location>
</feature>
<feature type="helix" evidence="5">
    <location>
        <begin position="428"/>
        <end position="439"/>
    </location>
</feature>
<accession>P39058</accession>
<sequence length="444" mass="49161">MLPSAQVARLKPDPFPPSLSPIPHGAVTFAALAPCHNLPIFSSRQMLRDSLTYSHTSPTMSPQIANRFEASLDAQDIARISLFTLESGVILRDVPVAYKSWGRMNVSRDNCVIVCHTLTSSAHVTSWWPTLFGQGRAFDTSRYFIICLNYLGSPFGSAGPCSPDPDAEGQRPYGAKFPRTTIRDDVRIHRQVLDRLGVRQIAAVVGASMGGMHTLEWAFFGPEYVRKIVPIATSCRQSGWCAAWFETQRQCIYDDPKYLDGEYDVDDQPVRGLETARKIANLTYKSKPAMDERFHMAPGVQAGRNISSQDAKKEINGTDSGNSHRAGQPIEAVSSYLRYQAQKFAASFDANCYIAMTLKFDTHDISRGRAGSIPEALAMITQPALIICARSDGLYSFDEHVEMGRSIPNSRLCVVDTNEGHDFFVMEADKVNDAVRGFLDQSLM</sequence>
<gene>
    <name type="primary">CEFG</name>
</gene>
<reference key="1">
    <citation type="journal article" date="1992" name="J. Bacteriol.">
        <title>The cefG gene of Cephalosporium acremonium is linked to the cefEF gene and encodes a deacetylcephalosporin C acetyltransferase closely related to homoserine O-acetyltransferase.</title>
        <authorList>
            <person name="Gutierrez S."/>
            <person name="Velasco J."/>
            <person name="Fernandez F.J."/>
            <person name="Martin J.F."/>
        </authorList>
    </citation>
    <scope>NUCLEOTIDE SEQUENCE</scope>
    <scope>FUNCTION</scope>
    <scope>CATALYTIC ACTIVITY</scope>
    <source>
        <strain>C10</strain>
    </source>
</reference>
<reference key="2">
    <citation type="journal article" date="1993" name="Curr. Genet.">
        <title>Cloning, characterization, and use in strain improvement of the Cephalosporium acremonium gene cefG encoding acetyl transferase.</title>
        <authorList>
            <person name="Mathison L."/>
            <person name="Soliday C."/>
            <person name="Stepan T."/>
            <person name="Aldrich T."/>
            <person name="Rambosek J."/>
        </authorList>
    </citation>
    <scope>NUCLEOTIDE SEQUENCE [GENOMIC DNA]</scope>
    <source>
        <strain>PF14-1</strain>
    </source>
</reference>
<reference key="3">
    <citation type="journal article" date="1992" name="Biochem. Biophys. Res. Commun.">
        <title>Cloning and disruption of the cefG gene encoding acetyl coenzyme A: deacetylcephalosporin C o-acetyltransferase from Acremonium chrysogenum.</title>
        <authorList>
            <person name="Matsuda A."/>
            <person name="Sugiura H."/>
            <person name="Matsuyama K."/>
            <person name="Matsumoto H."/>
            <person name="Ichikawa S."/>
            <person name="Komatsu K."/>
        </authorList>
    </citation>
    <scope>NUCLEOTIDE SEQUENCE OF 60-444</scope>
    <source>
        <strain>IS-5</strain>
    </source>
</reference>
<reference key="4">
    <citation type="journal article" date="1992" name="Biochem. Biophys. Res. Commun.">
        <title>Molecular cloning of acetyl coenzyme A: deacetylcephalosporin C o-acetyltransferase cDNA from Acremonium chrysogenum: sequence and expression of catalytic activity in yeast.</title>
        <authorList>
            <person name="Matsuda A."/>
            <person name="Sugiura H."/>
            <person name="Matsuyama K."/>
            <person name="Matsumoto H."/>
            <person name="Ichikawa S."/>
            <person name="Komatsu K."/>
        </authorList>
    </citation>
    <scope>NUCLEOTIDE SEQUENCE [MRNA] OF 60-444</scope>
    <scope>PROTEIN SEQUENCE OF 72-91 AND 319-345</scope>
    <source>
        <strain>IS-5</strain>
    </source>
</reference>
<protein>
    <recommendedName>
        <fullName>Acetyl-CoA--deacetylcephalosporin C acetyltransferase</fullName>
        <shortName>DAC acetyltransferase</shortName>
        <shortName>DAC-AT</shortName>
        <shortName>DCPC-ATF</shortName>
        <ecNumber evidence="3">2.3.1.175</ecNumber>
    </recommendedName>
    <component>
        <recommendedName>
            <fullName>Acetyl-CoA--deacetylcephalosporin C O-acetyltransferase chain 1</fullName>
        </recommendedName>
    </component>
    <component>
        <recommendedName>
            <fullName>Acetyl-CoA--deacetylcephalosporin C O-acetyltransferase chain 2</fullName>
        </recommendedName>
    </component>
</protein>
<keyword id="KW-0002">3D-structure</keyword>
<keyword id="KW-0012">Acyltransferase</keyword>
<keyword id="KW-0045">Antibiotic biosynthesis</keyword>
<keyword id="KW-0903">Direct protein sequencing</keyword>
<keyword id="KW-0808">Transferase</keyword>
<evidence type="ECO:0000255" key="1"/>
<evidence type="ECO:0000269" key="2">
    <source>
    </source>
</evidence>
<evidence type="ECO:0000269" key="3">
    <source>
    </source>
</evidence>
<evidence type="ECO:0000305" key="4"/>
<evidence type="ECO:0007829" key="5">
    <source>
        <dbReference type="PDB" id="2VAT"/>
    </source>
</evidence>
<comment type="function">
    <text evidence="3">Catalyzes the conversion of deacetylcephalosporin C to cephalosporin C.</text>
</comment>
<comment type="catalytic activity">
    <reaction evidence="3">
        <text>deacetylcephalosporin C + acetyl-CoA = cephalosporin C + CoA</text>
        <dbReference type="Rhea" id="RHEA:23860"/>
        <dbReference type="ChEBI" id="CHEBI:57287"/>
        <dbReference type="ChEBI" id="CHEBI:57288"/>
        <dbReference type="ChEBI" id="CHEBI:57511"/>
        <dbReference type="ChEBI" id="CHEBI:58366"/>
        <dbReference type="EC" id="2.3.1.175"/>
    </reaction>
</comment>
<comment type="pathway">
    <text>Antibiotic biosynthesis; cephalosporin C biosynthesis.</text>
</comment>
<comment type="subunit">
    <text>Heterodimer of chain I and chain II.</text>
</comment>
<comment type="similarity">
    <text evidence="4">Belongs to the AB hydrolase superfamily. MetX family.</text>
</comment>
<comment type="caution">
    <text evidence="4">It is uncertain whether Met-1, Met-46 or Met-60 is the initiator.</text>
</comment>
<organism>
    <name type="scientific">Hapsidospora chrysogena</name>
    <name type="common">Acremonium chrysogenum</name>
    <dbReference type="NCBI Taxonomy" id="5044"/>
    <lineage>
        <taxon>Eukaryota</taxon>
        <taxon>Fungi</taxon>
        <taxon>Dikarya</taxon>
        <taxon>Ascomycota</taxon>
        <taxon>Pezizomycotina</taxon>
        <taxon>Sordariomycetes</taxon>
        <taxon>Hypocreomycetidae</taxon>
        <taxon>Hypocreales</taxon>
        <taxon>Bionectriaceae</taxon>
        <taxon>Hapsidospora</taxon>
    </lineage>
</organism>
<proteinExistence type="evidence at protein level"/>
<name>CEFG_HAPCH</name>
<dbReference type="EC" id="2.3.1.175" evidence="3"/>
<dbReference type="EMBL" id="S83551">
    <property type="protein sequence ID" value="AAB21471.2"/>
    <property type="molecule type" value="mRNA"/>
</dbReference>
<dbReference type="EMBL" id="M91649">
    <property type="protein sequence ID" value="AAA32673.1"/>
    <property type="molecule type" value="Genomic_DNA"/>
</dbReference>
<dbReference type="EMBL" id="X65583">
    <property type="protein sequence ID" value="CAA46542.1"/>
    <property type="molecule type" value="Genomic_DNA"/>
</dbReference>
<dbReference type="EMBL" id="S39881">
    <property type="protein sequence ID" value="AAB22484.1"/>
    <property type="molecule type" value="Genomic_DNA"/>
</dbReference>
<dbReference type="PIR" id="B41864">
    <property type="entry name" value="B41864"/>
</dbReference>
<dbReference type="PDB" id="2VAT">
    <property type="method" value="X-ray"/>
    <property type="resolution" value="2.20 A"/>
    <property type="chains" value="A/B/C/D/E/F/G/H/I/J/K/L=1-444"/>
</dbReference>
<dbReference type="PDB" id="2VAV">
    <property type="method" value="X-ray"/>
    <property type="resolution" value="2.50 A"/>
    <property type="chains" value="A/B/C/D/E/F/G/H/I/J/K/L=1-444"/>
</dbReference>
<dbReference type="PDB" id="2VAX">
    <property type="method" value="X-ray"/>
    <property type="resolution" value="2.60 A"/>
    <property type="chains" value="A/B/C/D/E/F/G/H/I/J/K/L=1-444"/>
</dbReference>
<dbReference type="PDBsum" id="2VAT"/>
<dbReference type="PDBsum" id="2VAV"/>
<dbReference type="PDBsum" id="2VAX"/>
<dbReference type="SMR" id="P39058"/>
<dbReference type="ESTHER" id="cepac-cefg">
    <property type="family name" value="Homoserine_transacetylase"/>
</dbReference>
<dbReference type="KEGG" id="ag:AAA32673"/>
<dbReference type="BioCyc" id="MetaCyc:MONOMER-13419"/>
<dbReference type="BRENDA" id="2.3.1.175">
    <property type="organism ID" value="114"/>
</dbReference>
<dbReference type="UniPathway" id="UPA00172"/>
<dbReference type="EvolutionaryTrace" id="P39058"/>
<dbReference type="GO" id="GO:0033813">
    <property type="term" value="F:deacetylcephalosporin-C acetyltransferase activity"/>
    <property type="evidence" value="ECO:0000315"/>
    <property type="project" value="CACAO"/>
</dbReference>
<dbReference type="GO" id="GO:0004414">
    <property type="term" value="F:homoserine O-acetyltransferase activity"/>
    <property type="evidence" value="ECO:0007669"/>
    <property type="project" value="TreeGrafter"/>
</dbReference>
<dbReference type="GO" id="GO:0017000">
    <property type="term" value="P:antibiotic biosynthetic process"/>
    <property type="evidence" value="ECO:0007669"/>
    <property type="project" value="UniProtKB-KW"/>
</dbReference>
<dbReference type="GO" id="GO:0009092">
    <property type="term" value="P:homoserine metabolic process"/>
    <property type="evidence" value="ECO:0007669"/>
    <property type="project" value="TreeGrafter"/>
</dbReference>
<dbReference type="GO" id="GO:0009086">
    <property type="term" value="P:methionine biosynthetic process"/>
    <property type="evidence" value="ECO:0007669"/>
    <property type="project" value="TreeGrafter"/>
</dbReference>
<dbReference type="FunFam" id="3.40.50.1820:FF:000212">
    <property type="entry name" value="Acetyl-CoA--deacetylcephalosporin C acetyltransferase"/>
    <property type="match status" value="1"/>
</dbReference>
<dbReference type="Gene3D" id="3.40.50.1820">
    <property type="entry name" value="alpha/beta hydrolase"/>
    <property type="match status" value="1"/>
</dbReference>
<dbReference type="HAMAP" id="MF_00296">
    <property type="entry name" value="MetX_acyltransf"/>
    <property type="match status" value="1"/>
</dbReference>
<dbReference type="InterPro" id="IPR000073">
    <property type="entry name" value="AB_hydrolase_1"/>
</dbReference>
<dbReference type="InterPro" id="IPR029058">
    <property type="entry name" value="AB_hydrolase_fold"/>
</dbReference>
<dbReference type="InterPro" id="IPR008220">
    <property type="entry name" value="HAT_MetX-like"/>
</dbReference>
<dbReference type="NCBIfam" id="TIGR01392">
    <property type="entry name" value="homoserO_Ac_trn"/>
    <property type="match status" value="1"/>
</dbReference>
<dbReference type="NCBIfam" id="NF001209">
    <property type="entry name" value="PRK00175.1"/>
    <property type="match status" value="1"/>
</dbReference>
<dbReference type="PANTHER" id="PTHR32268">
    <property type="entry name" value="HOMOSERINE O-ACETYLTRANSFERASE"/>
    <property type="match status" value="1"/>
</dbReference>
<dbReference type="PANTHER" id="PTHR32268:SF11">
    <property type="entry name" value="HOMOSERINE O-ACETYLTRANSFERASE"/>
    <property type="match status" value="1"/>
</dbReference>
<dbReference type="Pfam" id="PF00561">
    <property type="entry name" value="Abhydrolase_1"/>
    <property type="match status" value="1"/>
</dbReference>
<dbReference type="PIRSF" id="PIRSF000443">
    <property type="entry name" value="Homoser_Ac_trans"/>
    <property type="match status" value="1"/>
</dbReference>
<dbReference type="SUPFAM" id="SSF53474">
    <property type="entry name" value="alpha/beta-Hydrolases"/>
    <property type="match status" value="1"/>
</dbReference>